<name>HIS6_LEPIR</name>
<accession>Q9S4H7</accession>
<dbReference type="EC" id="4.3.2.10"/>
<dbReference type="EMBL" id="AF144879">
    <property type="protein sequence ID" value="AAD52165.1"/>
    <property type="molecule type" value="Genomic_DNA"/>
</dbReference>
<dbReference type="RefSeq" id="WP_025177747.1">
    <property type="nucleotide sequence ID" value="NZ_JQQK01000061.1"/>
</dbReference>
<dbReference type="SMR" id="Q9S4H7"/>
<dbReference type="UniPathway" id="UPA00031">
    <property type="reaction ID" value="UER00010"/>
</dbReference>
<dbReference type="GO" id="GO:0005737">
    <property type="term" value="C:cytoplasm"/>
    <property type="evidence" value="ECO:0007669"/>
    <property type="project" value="UniProtKB-SubCell"/>
</dbReference>
<dbReference type="GO" id="GO:0000107">
    <property type="term" value="F:imidazoleglycerol-phosphate synthase activity"/>
    <property type="evidence" value="ECO:0007669"/>
    <property type="project" value="InterPro"/>
</dbReference>
<dbReference type="GO" id="GO:0016829">
    <property type="term" value="F:lyase activity"/>
    <property type="evidence" value="ECO:0007669"/>
    <property type="project" value="UniProtKB-KW"/>
</dbReference>
<dbReference type="GO" id="GO:0000105">
    <property type="term" value="P:L-histidine biosynthetic process"/>
    <property type="evidence" value="ECO:0007669"/>
    <property type="project" value="UniProtKB-UniPathway"/>
</dbReference>
<dbReference type="CDD" id="cd04731">
    <property type="entry name" value="HisF"/>
    <property type="match status" value="1"/>
</dbReference>
<dbReference type="Gene3D" id="3.20.20.70">
    <property type="entry name" value="Aldolase class I"/>
    <property type="match status" value="1"/>
</dbReference>
<dbReference type="InterPro" id="IPR013785">
    <property type="entry name" value="Aldolase_TIM"/>
</dbReference>
<dbReference type="InterPro" id="IPR006062">
    <property type="entry name" value="His_biosynth"/>
</dbReference>
<dbReference type="InterPro" id="IPR004651">
    <property type="entry name" value="HisF"/>
</dbReference>
<dbReference type="InterPro" id="IPR050064">
    <property type="entry name" value="IGPS_HisA/HisF"/>
</dbReference>
<dbReference type="InterPro" id="IPR011060">
    <property type="entry name" value="RibuloseP-bd_barrel"/>
</dbReference>
<dbReference type="NCBIfam" id="NF038364">
    <property type="entry name" value="AglZ_HisF2_fam"/>
    <property type="match status" value="1"/>
</dbReference>
<dbReference type="PANTHER" id="PTHR21235:SF2">
    <property type="entry name" value="IMIDAZOLE GLYCEROL PHOSPHATE SYNTHASE HISHF"/>
    <property type="match status" value="1"/>
</dbReference>
<dbReference type="PANTHER" id="PTHR21235">
    <property type="entry name" value="IMIDAZOLE GLYCEROL PHOSPHATE SYNTHASE SUBUNIT HISF/H IGP SYNTHASE SUBUNIT HISF/H"/>
    <property type="match status" value="1"/>
</dbReference>
<dbReference type="Pfam" id="PF00977">
    <property type="entry name" value="His_biosynth"/>
    <property type="match status" value="1"/>
</dbReference>
<dbReference type="SUPFAM" id="SSF51366">
    <property type="entry name" value="Ribulose-phoshate binding barrel"/>
    <property type="match status" value="1"/>
</dbReference>
<evidence type="ECO:0000250" key="1"/>
<evidence type="ECO:0000255" key="2"/>
<evidence type="ECO:0000305" key="3"/>
<comment type="function">
    <text evidence="1">IGPS catalyzes the conversion of PRFAR and glutamine to IGP, AICAR and glutamate. The HisF subunit catalyzes the cyclization activity that produces IGP and AICAR from PRFAR using the ammonia provided by the HisH subunit (By similarity).</text>
</comment>
<comment type="catalytic activity">
    <reaction>
        <text>5-[(5-phospho-1-deoxy-D-ribulos-1-ylimino)methylamino]-1-(5-phospho-beta-D-ribosyl)imidazole-4-carboxamide + L-glutamine = D-erythro-1-(imidazol-4-yl)glycerol 3-phosphate + 5-amino-1-(5-phospho-beta-D-ribosyl)imidazole-4-carboxamide + L-glutamate + H(+)</text>
        <dbReference type="Rhea" id="RHEA:24793"/>
        <dbReference type="ChEBI" id="CHEBI:15378"/>
        <dbReference type="ChEBI" id="CHEBI:29985"/>
        <dbReference type="ChEBI" id="CHEBI:58278"/>
        <dbReference type="ChEBI" id="CHEBI:58359"/>
        <dbReference type="ChEBI" id="CHEBI:58475"/>
        <dbReference type="ChEBI" id="CHEBI:58525"/>
        <dbReference type="EC" id="4.3.2.10"/>
    </reaction>
</comment>
<comment type="pathway">
    <text>Amino-acid biosynthesis; L-histidine biosynthesis; L-histidine from 5-phospho-alpha-D-ribose 1-diphosphate: step 5/9.</text>
</comment>
<comment type="subunit">
    <text evidence="1">Heterodimer of HisH and HisF.</text>
</comment>
<comment type="subcellular location">
    <subcellularLocation>
        <location evidence="1">Cytoplasm</location>
    </subcellularLocation>
</comment>
<comment type="similarity">
    <text evidence="3">Belongs to the HisA/HisF family.</text>
</comment>
<comment type="caution">
    <text evidence="3">The potential active site Asp residue in position 11 is replaced by a Leu.</text>
</comment>
<reference key="1">
    <citation type="journal article" date="1999" name="FEMS Microbiol. Lett.">
        <title>Comparative analysis of the LPS biosynthetic loci of the genetic subtypes of serovar Hardjo: Leptospira interrogans subtype Hardjoprajitno and Leptospira borgpetersenii subtype Hardjobovis.</title>
        <authorList>
            <person name="De la Pena-Moctezuma A."/>
            <person name="Bulach D.M."/>
            <person name="Kalambaheti T."/>
            <person name="Adler B."/>
        </authorList>
    </citation>
    <scope>NUCLEOTIDE SEQUENCE [GENOMIC DNA]</scope>
    <source>
        <strain>Hardjoprajitno / Serogroup Sejroe / Serovar hardjo</strain>
    </source>
</reference>
<organism>
    <name type="scientific">Leptospira interrogans</name>
    <dbReference type="NCBI Taxonomy" id="173"/>
    <lineage>
        <taxon>Bacteria</taxon>
        <taxon>Pseudomonadati</taxon>
        <taxon>Spirochaetota</taxon>
        <taxon>Spirochaetia</taxon>
        <taxon>Leptospirales</taxon>
        <taxon>Leptospiraceae</taxon>
        <taxon>Leptospira</taxon>
    </lineage>
</organism>
<sequence>MLKPRIIPTLLVQHGGLVKTIKFSNQRYIGDPLNAVRIFNEKEADELTVLDISASREGKAPDYRLIERLANECRMPLSYGGGIKNLEQASRILSFGVEKIIVSSLAIENPKVISSMATYLGNQSVVVAIDFKKTLLTRRYEVFIHNGTKKTGISPEDLLKHAIEFGAGEILLNSIDRDGVMEGYDLEMLKKFRSICTVPMTVLGGAGSLQDLKSLIQNLGIVGVSAGSLFVYKGIHKAVLINYPNREDKEALFY</sequence>
<gene>
    <name type="primary">hisF</name>
</gene>
<keyword id="KW-0028">Amino-acid biosynthesis</keyword>
<keyword id="KW-0963">Cytoplasm</keyword>
<keyword id="KW-0368">Histidine biosynthesis</keyword>
<keyword id="KW-0456">Lyase</keyword>
<feature type="chain" id="PRO_0000142175" description="Putative imidazole glycerol phosphate synthase subunit HisF">
    <location>
        <begin position="1"/>
        <end position="254"/>
    </location>
</feature>
<feature type="active site" evidence="2">
    <location>
        <position position="130"/>
    </location>
</feature>
<protein>
    <recommendedName>
        <fullName>Putative imidazole glycerol phosphate synthase subunit HisF</fullName>
        <ecNumber>4.3.2.10</ecNumber>
    </recommendedName>
    <alternativeName>
        <fullName>IGP synthase cyclase subunit</fullName>
    </alternativeName>
    <alternativeName>
        <fullName>IGP synthase subunit HisF</fullName>
    </alternativeName>
    <alternativeName>
        <fullName>ImGP synthase subunit HisF</fullName>
        <shortName>IGPS subunit HisF</shortName>
    </alternativeName>
</protein>
<proteinExistence type="inferred from homology"/>